<organism>
    <name type="scientific">Campylobacter jejuni subsp. jejuni serotype O:2 (strain ATCC 700819 / NCTC 11168)</name>
    <dbReference type="NCBI Taxonomy" id="192222"/>
    <lineage>
        <taxon>Bacteria</taxon>
        <taxon>Pseudomonadati</taxon>
        <taxon>Campylobacterota</taxon>
        <taxon>Epsilonproteobacteria</taxon>
        <taxon>Campylobacterales</taxon>
        <taxon>Campylobacteraceae</taxon>
        <taxon>Campylobacter</taxon>
    </lineage>
</organism>
<gene>
    <name evidence="1" type="primary">atpC</name>
    <name type="ordered locus">Cj0108</name>
</gene>
<name>ATPE_CAMJE</name>
<comment type="function">
    <text evidence="1">Produces ATP from ADP in the presence of a proton gradient across the membrane.</text>
</comment>
<comment type="subunit">
    <text>F-type ATPases have 2 components, CF(1) - the catalytic core - and CF(0) - the membrane proton channel. CF(1) has five subunits: alpha(3), beta(3), gamma(1), delta(1), epsilon(1). CF(0) has three main subunits: a, b and c.</text>
</comment>
<comment type="subcellular location">
    <subcellularLocation>
        <location evidence="1">Cell inner membrane</location>
        <topology evidence="1">Peripheral membrane protein</topology>
    </subcellularLocation>
</comment>
<comment type="similarity">
    <text evidence="1">Belongs to the ATPase epsilon chain family.</text>
</comment>
<sequence>MNDLINFEIVTPLGVIYQGEVKSVTLPGSEGEFGVLKGHAALVSSLKSGVIDIEKADLNHELIAIDAGHAKVDEDKICVLAKGAVWVCGSDESEIEKNLAQAKDLIKSMSSDNAALAATFSKLDNARMH</sequence>
<feature type="chain" id="PRO_0000188116" description="ATP synthase epsilon chain">
    <location>
        <begin position="1"/>
        <end position="129"/>
    </location>
</feature>
<proteinExistence type="inferred from homology"/>
<keyword id="KW-0066">ATP synthesis</keyword>
<keyword id="KW-0997">Cell inner membrane</keyword>
<keyword id="KW-1003">Cell membrane</keyword>
<keyword id="KW-0139">CF(1)</keyword>
<keyword id="KW-0375">Hydrogen ion transport</keyword>
<keyword id="KW-0406">Ion transport</keyword>
<keyword id="KW-0472">Membrane</keyword>
<keyword id="KW-1185">Reference proteome</keyword>
<keyword id="KW-0813">Transport</keyword>
<evidence type="ECO:0000255" key="1">
    <source>
        <dbReference type="HAMAP-Rule" id="MF_00530"/>
    </source>
</evidence>
<reference key="1">
    <citation type="journal article" date="2000" name="Nature">
        <title>The genome sequence of the food-borne pathogen Campylobacter jejuni reveals hypervariable sequences.</title>
        <authorList>
            <person name="Parkhill J."/>
            <person name="Wren B.W."/>
            <person name="Mungall K.L."/>
            <person name="Ketley J.M."/>
            <person name="Churcher C.M."/>
            <person name="Basham D."/>
            <person name="Chillingworth T."/>
            <person name="Davies R.M."/>
            <person name="Feltwell T."/>
            <person name="Holroyd S."/>
            <person name="Jagels K."/>
            <person name="Karlyshev A.V."/>
            <person name="Moule S."/>
            <person name="Pallen M.J."/>
            <person name="Penn C.W."/>
            <person name="Quail M.A."/>
            <person name="Rajandream M.A."/>
            <person name="Rutherford K.M."/>
            <person name="van Vliet A.H.M."/>
            <person name="Whitehead S."/>
            <person name="Barrell B.G."/>
        </authorList>
    </citation>
    <scope>NUCLEOTIDE SEQUENCE [LARGE SCALE GENOMIC DNA]</scope>
    <source>
        <strain>ATCC 700819 / NCTC 11168</strain>
    </source>
</reference>
<protein>
    <recommendedName>
        <fullName evidence="1">ATP synthase epsilon chain</fullName>
    </recommendedName>
    <alternativeName>
        <fullName evidence="1">ATP synthase F1 sector epsilon subunit</fullName>
    </alternativeName>
    <alternativeName>
        <fullName evidence="1">F-ATPase epsilon subunit</fullName>
    </alternativeName>
</protein>
<dbReference type="EMBL" id="AL111168">
    <property type="protein sequence ID" value="CAL34279.1"/>
    <property type="molecule type" value="Genomic_DNA"/>
</dbReference>
<dbReference type="PIR" id="D81427">
    <property type="entry name" value="D81427"/>
</dbReference>
<dbReference type="RefSeq" id="WP_002851752.1">
    <property type="nucleotide sequence ID" value="NZ_SZUC01000005.1"/>
</dbReference>
<dbReference type="RefSeq" id="YP_002343568.1">
    <property type="nucleotide sequence ID" value="NC_002163.1"/>
</dbReference>
<dbReference type="SMR" id="Q9PJ18"/>
<dbReference type="STRING" id="192222.Cj0108"/>
<dbReference type="PaxDb" id="192222-Cj0108"/>
<dbReference type="EnsemblBacteria" id="CAL34279">
    <property type="protein sequence ID" value="CAL34279"/>
    <property type="gene ID" value="Cj0108"/>
</dbReference>
<dbReference type="GeneID" id="904438"/>
<dbReference type="KEGG" id="cje:Cj0108"/>
<dbReference type="PATRIC" id="fig|192222.6.peg.106"/>
<dbReference type="eggNOG" id="COG0355">
    <property type="taxonomic scope" value="Bacteria"/>
</dbReference>
<dbReference type="HOGENOM" id="CLU_084338_2_1_7"/>
<dbReference type="OrthoDB" id="9799969at2"/>
<dbReference type="Proteomes" id="UP000000799">
    <property type="component" value="Chromosome"/>
</dbReference>
<dbReference type="GO" id="GO:0005886">
    <property type="term" value="C:plasma membrane"/>
    <property type="evidence" value="ECO:0007669"/>
    <property type="project" value="UniProtKB-SubCell"/>
</dbReference>
<dbReference type="GO" id="GO:0045259">
    <property type="term" value="C:proton-transporting ATP synthase complex"/>
    <property type="evidence" value="ECO:0007669"/>
    <property type="project" value="UniProtKB-KW"/>
</dbReference>
<dbReference type="GO" id="GO:0005524">
    <property type="term" value="F:ATP binding"/>
    <property type="evidence" value="ECO:0007669"/>
    <property type="project" value="UniProtKB-UniRule"/>
</dbReference>
<dbReference type="GO" id="GO:0046933">
    <property type="term" value="F:proton-transporting ATP synthase activity, rotational mechanism"/>
    <property type="evidence" value="ECO:0007669"/>
    <property type="project" value="UniProtKB-UniRule"/>
</dbReference>
<dbReference type="CDD" id="cd12152">
    <property type="entry name" value="F1-ATPase_delta"/>
    <property type="match status" value="1"/>
</dbReference>
<dbReference type="Gene3D" id="2.60.15.10">
    <property type="entry name" value="F0F1 ATP synthase delta/epsilon subunit, N-terminal"/>
    <property type="match status" value="1"/>
</dbReference>
<dbReference type="HAMAP" id="MF_00530">
    <property type="entry name" value="ATP_synth_epsil_bac"/>
    <property type="match status" value="1"/>
</dbReference>
<dbReference type="InterPro" id="IPR001469">
    <property type="entry name" value="ATP_synth_F1_dsu/esu"/>
</dbReference>
<dbReference type="InterPro" id="IPR020546">
    <property type="entry name" value="ATP_synth_F1_dsu/esu_N"/>
</dbReference>
<dbReference type="InterPro" id="IPR036771">
    <property type="entry name" value="ATPsynth_dsu/esu_N"/>
</dbReference>
<dbReference type="NCBIfam" id="TIGR01216">
    <property type="entry name" value="ATP_synt_epsi"/>
    <property type="match status" value="1"/>
</dbReference>
<dbReference type="PANTHER" id="PTHR13822">
    <property type="entry name" value="ATP SYNTHASE DELTA/EPSILON CHAIN"/>
    <property type="match status" value="1"/>
</dbReference>
<dbReference type="PANTHER" id="PTHR13822:SF10">
    <property type="entry name" value="ATP SYNTHASE EPSILON CHAIN, CHLOROPLASTIC"/>
    <property type="match status" value="1"/>
</dbReference>
<dbReference type="Pfam" id="PF02823">
    <property type="entry name" value="ATP-synt_DE_N"/>
    <property type="match status" value="1"/>
</dbReference>
<dbReference type="SUPFAM" id="SSF51344">
    <property type="entry name" value="Epsilon subunit of F1F0-ATP synthase N-terminal domain"/>
    <property type="match status" value="1"/>
</dbReference>
<accession>Q9PJ18</accession>
<accession>Q0PC29</accession>